<proteinExistence type="inferred from homology"/>
<reference key="1">
    <citation type="submission" date="2007-06" db="EMBL/GenBank/DDBJ databases">
        <title>Complete sequence of Marinomonas sp. MWYL1.</title>
        <authorList>
            <consortium name="US DOE Joint Genome Institute"/>
            <person name="Copeland A."/>
            <person name="Lucas S."/>
            <person name="Lapidus A."/>
            <person name="Barry K."/>
            <person name="Glavina del Rio T."/>
            <person name="Dalin E."/>
            <person name="Tice H."/>
            <person name="Pitluck S."/>
            <person name="Kiss H."/>
            <person name="Brettin T."/>
            <person name="Bruce D."/>
            <person name="Detter J.C."/>
            <person name="Han C."/>
            <person name="Schmutz J."/>
            <person name="Larimer F."/>
            <person name="Land M."/>
            <person name="Hauser L."/>
            <person name="Kyrpides N."/>
            <person name="Kim E."/>
            <person name="Johnston A.W.B."/>
            <person name="Todd J.D."/>
            <person name="Rogers R."/>
            <person name="Wexler M."/>
            <person name="Bond P.L."/>
            <person name="Li Y."/>
            <person name="Richardson P."/>
        </authorList>
    </citation>
    <scope>NUCLEOTIDE SEQUENCE [LARGE SCALE GENOMIC DNA]</scope>
    <source>
        <strain>MWYL1</strain>
    </source>
</reference>
<evidence type="ECO:0000255" key="1">
    <source>
        <dbReference type="HAMAP-Rule" id="MF_00001"/>
    </source>
</evidence>
<keyword id="KW-0665">Pyrimidine biosynthesis</keyword>
<keyword id="KW-0808">Transferase</keyword>
<accession>A6VSP9</accession>
<comment type="function">
    <text evidence="1">Catalyzes the condensation of carbamoyl phosphate and aspartate to form carbamoyl aspartate and inorganic phosphate, the committed step in the de novo pyrimidine nucleotide biosynthesis pathway.</text>
</comment>
<comment type="catalytic activity">
    <reaction evidence="1">
        <text>carbamoyl phosphate + L-aspartate = N-carbamoyl-L-aspartate + phosphate + H(+)</text>
        <dbReference type="Rhea" id="RHEA:20013"/>
        <dbReference type="ChEBI" id="CHEBI:15378"/>
        <dbReference type="ChEBI" id="CHEBI:29991"/>
        <dbReference type="ChEBI" id="CHEBI:32814"/>
        <dbReference type="ChEBI" id="CHEBI:43474"/>
        <dbReference type="ChEBI" id="CHEBI:58228"/>
        <dbReference type="EC" id="2.1.3.2"/>
    </reaction>
</comment>
<comment type="pathway">
    <text evidence="1">Pyrimidine metabolism; UMP biosynthesis via de novo pathway; (S)-dihydroorotate from bicarbonate: step 2/3.</text>
</comment>
<comment type="subunit">
    <text evidence="1">Heterododecamer (2C3:3R2) of six catalytic PyrB chains organized as two trimers (C3), and six regulatory PyrI chains organized as three dimers (R2).</text>
</comment>
<comment type="similarity">
    <text evidence="1">Belongs to the aspartate/ornithine carbamoyltransferase superfamily. ATCase family.</text>
</comment>
<organism>
    <name type="scientific">Marinomonas sp. (strain MWYL1)</name>
    <dbReference type="NCBI Taxonomy" id="400668"/>
    <lineage>
        <taxon>Bacteria</taxon>
        <taxon>Pseudomonadati</taxon>
        <taxon>Pseudomonadota</taxon>
        <taxon>Gammaproteobacteria</taxon>
        <taxon>Oceanospirillales</taxon>
        <taxon>Oceanospirillaceae</taxon>
        <taxon>Marinomonas</taxon>
    </lineage>
</organism>
<name>PYRB_MARMS</name>
<sequence>MMRSEPRALQLNEHGQLKHFLTLDGLDKTILTEILDRADSFLSMGEQSVKKVPLLRGKTVVNLFFENSTRTRTTFELAAKRLSADVINLNIETSATSKGESLLDTLKNLEAMQSDMFIVRHSDSGAAHFIAEHCTPNVAIINAGDGRHAHPTQAMLDMLTIRRHKGSFDGLKIAIVGDILHSRVARSQLQALTTLGVSDVRLVGPKTLVPSFFEEMGATICHDLEAGLKDVDVVVMLRLQKERMKGALLPSESEFYRLYGLTEETLAWAKPDAIVMHPGPINRGVEISSEVADGKHSVILNQVTNGIAVRMAVMSMAMSGQLQSDETPAAKDEK</sequence>
<gene>
    <name evidence="1" type="primary">pyrB</name>
    <name type="ordered locus">Mmwyl1_0542</name>
</gene>
<protein>
    <recommendedName>
        <fullName evidence="1">Aspartate carbamoyltransferase catalytic subunit</fullName>
        <ecNumber evidence="1">2.1.3.2</ecNumber>
    </recommendedName>
    <alternativeName>
        <fullName evidence="1">Aspartate transcarbamylase</fullName>
        <shortName evidence="1">ATCase</shortName>
    </alternativeName>
</protein>
<dbReference type="EC" id="2.1.3.2" evidence="1"/>
<dbReference type="EMBL" id="CP000749">
    <property type="protein sequence ID" value="ABR69478.1"/>
    <property type="molecule type" value="Genomic_DNA"/>
</dbReference>
<dbReference type="SMR" id="A6VSP9"/>
<dbReference type="STRING" id="400668.Mmwyl1_0542"/>
<dbReference type="KEGG" id="mmw:Mmwyl1_0542"/>
<dbReference type="eggNOG" id="COG0540">
    <property type="taxonomic scope" value="Bacteria"/>
</dbReference>
<dbReference type="HOGENOM" id="CLU_043846_2_0_6"/>
<dbReference type="OrthoDB" id="9774690at2"/>
<dbReference type="UniPathway" id="UPA00070">
    <property type="reaction ID" value="UER00116"/>
</dbReference>
<dbReference type="GO" id="GO:0005829">
    <property type="term" value="C:cytosol"/>
    <property type="evidence" value="ECO:0007669"/>
    <property type="project" value="TreeGrafter"/>
</dbReference>
<dbReference type="GO" id="GO:0016597">
    <property type="term" value="F:amino acid binding"/>
    <property type="evidence" value="ECO:0007669"/>
    <property type="project" value="InterPro"/>
</dbReference>
<dbReference type="GO" id="GO:0004070">
    <property type="term" value="F:aspartate carbamoyltransferase activity"/>
    <property type="evidence" value="ECO:0007669"/>
    <property type="project" value="UniProtKB-UniRule"/>
</dbReference>
<dbReference type="GO" id="GO:0006207">
    <property type="term" value="P:'de novo' pyrimidine nucleobase biosynthetic process"/>
    <property type="evidence" value="ECO:0007669"/>
    <property type="project" value="InterPro"/>
</dbReference>
<dbReference type="GO" id="GO:0044205">
    <property type="term" value="P:'de novo' UMP biosynthetic process"/>
    <property type="evidence" value="ECO:0007669"/>
    <property type="project" value="UniProtKB-UniRule"/>
</dbReference>
<dbReference type="GO" id="GO:0006520">
    <property type="term" value="P:amino acid metabolic process"/>
    <property type="evidence" value="ECO:0007669"/>
    <property type="project" value="InterPro"/>
</dbReference>
<dbReference type="FunFam" id="3.40.50.1370:FF:000006">
    <property type="entry name" value="Aspartate carbamoyltransferase"/>
    <property type="match status" value="1"/>
</dbReference>
<dbReference type="FunFam" id="3.40.50.1370:FF:000007">
    <property type="entry name" value="Aspartate carbamoyltransferase"/>
    <property type="match status" value="1"/>
</dbReference>
<dbReference type="Gene3D" id="3.40.50.1370">
    <property type="entry name" value="Aspartate/ornithine carbamoyltransferase"/>
    <property type="match status" value="2"/>
</dbReference>
<dbReference type="HAMAP" id="MF_00001">
    <property type="entry name" value="Asp_carb_tr"/>
    <property type="match status" value="1"/>
</dbReference>
<dbReference type="InterPro" id="IPR006132">
    <property type="entry name" value="Asp/Orn_carbamoyltranf_P-bd"/>
</dbReference>
<dbReference type="InterPro" id="IPR006130">
    <property type="entry name" value="Asp/Orn_carbamoylTrfase"/>
</dbReference>
<dbReference type="InterPro" id="IPR036901">
    <property type="entry name" value="Asp/Orn_carbamoylTrfase_sf"/>
</dbReference>
<dbReference type="InterPro" id="IPR002082">
    <property type="entry name" value="Asp_carbamoyltransf"/>
</dbReference>
<dbReference type="InterPro" id="IPR006131">
    <property type="entry name" value="Asp_carbamoyltransf_Asp/Orn-bd"/>
</dbReference>
<dbReference type="NCBIfam" id="TIGR00670">
    <property type="entry name" value="asp_carb_tr"/>
    <property type="match status" value="1"/>
</dbReference>
<dbReference type="NCBIfam" id="NF002032">
    <property type="entry name" value="PRK00856.1"/>
    <property type="match status" value="1"/>
</dbReference>
<dbReference type="PANTHER" id="PTHR45753:SF6">
    <property type="entry name" value="ASPARTATE CARBAMOYLTRANSFERASE"/>
    <property type="match status" value="1"/>
</dbReference>
<dbReference type="PANTHER" id="PTHR45753">
    <property type="entry name" value="ORNITHINE CARBAMOYLTRANSFERASE, MITOCHONDRIAL"/>
    <property type="match status" value="1"/>
</dbReference>
<dbReference type="Pfam" id="PF00185">
    <property type="entry name" value="OTCace"/>
    <property type="match status" value="1"/>
</dbReference>
<dbReference type="Pfam" id="PF02729">
    <property type="entry name" value="OTCace_N"/>
    <property type="match status" value="1"/>
</dbReference>
<dbReference type="PRINTS" id="PR00100">
    <property type="entry name" value="AOTCASE"/>
</dbReference>
<dbReference type="PRINTS" id="PR00101">
    <property type="entry name" value="ATCASE"/>
</dbReference>
<dbReference type="SUPFAM" id="SSF53671">
    <property type="entry name" value="Aspartate/ornithine carbamoyltransferase"/>
    <property type="match status" value="1"/>
</dbReference>
<dbReference type="PROSITE" id="PS00097">
    <property type="entry name" value="CARBAMOYLTRANSFERASE"/>
    <property type="match status" value="1"/>
</dbReference>
<feature type="chain" id="PRO_0000334589" description="Aspartate carbamoyltransferase catalytic subunit">
    <location>
        <begin position="1"/>
        <end position="334"/>
    </location>
</feature>
<feature type="binding site" evidence="1">
    <location>
        <position position="70"/>
    </location>
    <ligand>
        <name>carbamoyl phosphate</name>
        <dbReference type="ChEBI" id="CHEBI:58228"/>
    </ligand>
</feature>
<feature type="binding site" evidence="1">
    <location>
        <position position="71"/>
    </location>
    <ligand>
        <name>carbamoyl phosphate</name>
        <dbReference type="ChEBI" id="CHEBI:58228"/>
    </ligand>
</feature>
<feature type="binding site" evidence="1">
    <location>
        <position position="98"/>
    </location>
    <ligand>
        <name>L-aspartate</name>
        <dbReference type="ChEBI" id="CHEBI:29991"/>
    </ligand>
</feature>
<feature type="binding site" evidence="1">
    <location>
        <position position="120"/>
    </location>
    <ligand>
        <name>carbamoyl phosphate</name>
        <dbReference type="ChEBI" id="CHEBI:58228"/>
    </ligand>
</feature>
<feature type="binding site" evidence="1">
    <location>
        <position position="150"/>
    </location>
    <ligand>
        <name>carbamoyl phosphate</name>
        <dbReference type="ChEBI" id="CHEBI:58228"/>
    </ligand>
</feature>
<feature type="binding site" evidence="1">
    <location>
        <position position="153"/>
    </location>
    <ligand>
        <name>carbamoyl phosphate</name>
        <dbReference type="ChEBI" id="CHEBI:58228"/>
    </ligand>
</feature>
<feature type="binding site" evidence="1">
    <location>
        <position position="183"/>
    </location>
    <ligand>
        <name>L-aspartate</name>
        <dbReference type="ChEBI" id="CHEBI:29991"/>
    </ligand>
</feature>
<feature type="binding site" evidence="1">
    <location>
        <position position="238"/>
    </location>
    <ligand>
        <name>L-aspartate</name>
        <dbReference type="ChEBI" id="CHEBI:29991"/>
    </ligand>
</feature>
<feature type="binding site" evidence="1">
    <location>
        <position position="279"/>
    </location>
    <ligand>
        <name>carbamoyl phosphate</name>
        <dbReference type="ChEBI" id="CHEBI:58228"/>
    </ligand>
</feature>
<feature type="binding site" evidence="1">
    <location>
        <position position="280"/>
    </location>
    <ligand>
        <name>carbamoyl phosphate</name>
        <dbReference type="ChEBI" id="CHEBI:58228"/>
    </ligand>
</feature>